<proteinExistence type="inferred from homology"/>
<organism>
    <name type="scientific">Zygnema circumcarinatum</name>
    <name type="common">Green alga</name>
    <dbReference type="NCBI Taxonomy" id="35869"/>
    <lineage>
        <taxon>Eukaryota</taxon>
        <taxon>Viridiplantae</taxon>
        <taxon>Streptophyta</taxon>
        <taxon>Zygnematophyceae</taxon>
        <taxon>Zygnematophycidae</taxon>
        <taxon>Zygnematales</taxon>
        <taxon>Zygnemataceae</taxon>
        <taxon>Zygnema</taxon>
    </lineage>
</organism>
<evidence type="ECO:0000255" key="1">
    <source>
        <dbReference type="HAMAP-Rule" id="MF_01316"/>
    </source>
</evidence>
<protein>
    <recommendedName>
        <fullName evidence="1">Photosystem II reaction center protein I</fullName>
        <shortName evidence="1">PSII-I</shortName>
    </recommendedName>
    <alternativeName>
        <fullName evidence="1">PSII 4.8 kDa protein</fullName>
    </alternativeName>
</protein>
<comment type="function">
    <text evidence="1">One of the components of the core complex of photosystem II (PSII), required for its stability and/or assembly. PSII is a light-driven water:plastoquinone oxidoreductase that uses light energy to abstract electrons from H(2)O, generating O(2) and a proton gradient subsequently used for ATP formation. It consists of a core antenna complex that captures photons, and an electron transfer chain that converts photonic excitation into a charge separation.</text>
</comment>
<comment type="subunit">
    <text evidence="1">PSII is composed of 1 copy each of membrane proteins PsbA, PsbB, PsbC, PsbD, PsbE, PsbF, PsbH, PsbI, PsbJ, PsbK, PsbL, PsbM, PsbT, PsbX, PsbY, PsbZ, Psb30/Ycf12, at least 3 peripheral proteins of the oxygen-evolving complex and a large number of cofactors. It forms dimeric complexes.</text>
</comment>
<comment type="subcellular location">
    <subcellularLocation>
        <location evidence="1">Plastid</location>
        <location evidence="1">Chloroplast thylakoid membrane</location>
        <topology evidence="1">Single-pass membrane protein</topology>
    </subcellularLocation>
</comment>
<comment type="similarity">
    <text evidence="1">Belongs to the PsbI family.</text>
</comment>
<gene>
    <name evidence="1" type="primary">psbI</name>
</gene>
<reference key="1">
    <citation type="journal article" date="2005" name="BMC Biol.">
        <title>The complete chloroplast DNA sequences of the charophycean green algae Staurastrum and Zygnema reveal that the chloroplast genome underwent extensive changes during the evolution of the Zygnematales.</title>
        <authorList>
            <person name="Turmel M."/>
            <person name="Otis C."/>
            <person name="Lemieux C."/>
        </authorList>
    </citation>
    <scope>NUCLEOTIDE SEQUENCE [LARGE SCALE GENOMIC DNA]</scope>
</reference>
<feature type="chain" id="PRO_0000275816" description="Photosystem II reaction center protein I">
    <location>
        <begin position="1"/>
        <end position="36"/>
    </location>
</feature>
<feature type="transmembrane region" description="Helical" evidence="1">
    <location>
        <begin position="4"/>
        <end position="24"/>
    </location>
</feature>
<dbReference type="EMBL" id="AY958086">
    <property type="protein sequence ID" value="AAX45843.1"/>
    <property type="molecule type" value="Genomic_DNA"/>
</dbReference>
<dbReference type="RefSeq" id="YP_636484.1">
    <property type="nucleotide sequence ID" value="NC_008117.1"/>
</dbReference>
<dbReference type="SMR" id="Q32RP2"/>
<dbReference type="GeneID" id="4108163"/>
<dbReference type="GO" id="GO:0009535">
    <property type="term" value="C:chloroplast thylakoid membrane"/>
    <property type="evidence" value="ECO:0007669"/>
    <property type="project" value="UniProtKB-SubCell"/>
</dbReference>
<dbReference type="GO" id="GO:0009539">
    <property type="term" value="C:photosystem II reaction center"/>
    <property type="evidence" value="ECO:0007669"/>
    <property type="project" value="InterPro"/>
</dbReference>
<dbReference type="GO" id="GO:0015979">
    <property type="term" value="P:photosynthesis"/>
    <property type="evidence" value="ECO:0007669"/>
    <property type="project" value="UniProtKB-UniRule"/>
</dbReference>
<dbReference type="HAMAP" id="MF_01316">
    <property type="entry name" value="PSII_PsbI"/>
    <property type="match status" value="1"/>
</dbReference>
<dbReference type="InterPro" id="IPR003686">
    <property type="entry name" value="PSII_PsbI"/>
</dbReference>
<dbReference type="InterPro" id="IPR037271">
    <property type="entry name" value="PSII_PsbI_sf"/>
</dbReference>
<dbReference type="NCBIfam" id="NF002735">
    <property type="entry name" value="PRK02655.1"/>
    <property type="match status" value="1"/>
</dbReference>
<dbReference type="PANTHER" id="PTHR35772">
    <property type="entry name" value="PHOTOSYSTEM II REACTION CENTER PROTEIN I"/>
    <property type="match status" value="1"/>
</dbReference>
<dbReference type="PANTHER" id="PTHR35772:SF1">
    <property type="entry name" value="PHOTOSYSTEM II REACTION CENTER PROTEIN I"/>
    <property type="match status" value="1"/>
</dbReference>
<dbReference type="Pfam" id="PF02532">
    <property type="entry name" value="PsbI"/>
    <property type="match status" value="1"/>
</dbReference>
<dbReference type="SUPFAM" id="SSF161041">
    <property type="entry name" value="Photosystem II reaction center protein I, PsbI"/>
    <property type="match status" value="1"/>
</dbReference>
<keyword id="KW-0150">Chloroplast</keyword>
<keyword id="KW-0472">Membrane</keyword>
<keyword id="KW-0602">Photosynthesis</keyword>
<keyword id="KW-0604">Photosystem II</keyword>
<keyword id="KW-0934">Plastid</keyword>
<keyword id="KW-0674">Reaction center</keyword>
<keyword id="KW-0793">Thylakoid</keyword>
<keyword id="KW-0812">Transmembrane</keyword>
<keyword id="KW-1133">Transmembrane helix</keyword>
<geneLocation type="chloroplast"/>
<sequence>MLTLKLFVYTVIIFFVSLFVFGFLSNDPSRNPGRKE</sequence>
<name>PSBI_ZYGCR</name>
<accession>Q32RP2</accession>